<organism>
    <name type="scientific">Lycosa singoriensis</name>
    <name type="common">Wolf spider</name>
    <name type="synonym">Aranea singoriensis</name>
    <dbReference type="NCBI Taxonomy" id="434756"/>
    <lineage>
        <taxon>Eukaryota</taxon>
        <taxon>Metazoa</taxon>
        <taxon>Ecdysozoa</taxon>
        <taxon>Arthropoda</taxon>
        <taxon>Chelicerata</taxon>
        <taxon>Arachnida</taxon>
        <taxon>Araneae</taxon>
        <taxon>Araneomorphae</taxon>
        <taxon>Entelegynae</taxon>
        <taxon>Lycosoidea</taxon>
        <taxon>Lycosidae</taxon>
        <taxon>Lycosa</taxon>
    </lineage>
</organism>
<proteinExistence type="evidence at transcript level"/>
<dbReference type="EMBL" id="EU926101">
    <property type="protein sequence ID" value="ACI41433.1"/>
    <property type="molecule type" value="mRNA"/>
</dbReference>
<dbReference type="EMBL" id="FM864105">
    <property type="protein sequence ID" value="CAS03702.1"/>
    <property type="molecule type" value="mRNA"/>
</dbReference>
<dbReference type="SMR" id="B6DD17"/>
<dbReference type="ArachnoServer" id="AS001036">
    <property type="toxin name" value="U12-lycotoxin-Ls1a"/>
</dbReference>
<dbReference type="GO" id="GO:0005576">
    <property type="term" value="C:extracellular region"/>
    <property type="evidence" value="ECO:0007669"/>
    <property type="project" value="UniProtKB-SubCell"/>
</dbReference>
<dbReference type="GO" id="GO:0090729">
    <property type="term" value="F:toxin activity"/>
    <property type="evidence" value="ECO:0007669"/>
    <property type="project" value="UniProtKB-KW"/>
</dbReference>
<keyword id="KW-1015">Disulfide bond</keyword>
<keyword id="KW-0964">Secreted</keyword>
<keyword id="KW-0732">Signal</keyword>
<keyword id="KW-0800">Toxin</keyword>
<reference key="1">
    <citation type="journal article" date="2010" name="Zoology">
        <title>Transcriptome analysis of the venom glands of the Chinese wolf spider Lycosa singoriensis.</title>
        <authorList>
            <person name="Zhang Y."/>
            <person name="Chen J."/>
            <person name="Tang X."/>
            <person name="Wang F."/>
            <person name="Jiang L."/>
            <person name="Xiong X."/>
            <person name="Wang M."/>
            <person name="Rong M."/>
            <person name="Liu Z."/>
            <person name="Liang S."/>
        </authorList>
    </citation>
    <scope>NUCLEOTIDE SEQUENCE [LARGE SCALE MRNA]</scope>
    <source>
        <tissue>Venom gland</tissue>
    </source>
</reference>
<protein>
    <recommendedName>
        <fullName>U12-lycotoxin-Ls1a</fullName>
    </recommendedName>
    <alternativeName>
        <fullName>Toxin-like structure LSTX-K5</fullName>
    </alternativeName>
</protein>
<comment type="subcellular location">
    <subcellularLocation>
        <location evidence="1">Secreted</location>
    </subcellularLocation>
</comment>
<comment type="tissue specificity">
    <text>Expressed by the venom gland.</text>
</comment>
<comment type="PTM">
    <text evidence="3">Contains 5 disulfide bonds.</text>
</comment>
<comment type="similarity">
    <text evidence="3">Belongs to the neurotoxin 31 family.</text>
</comment>
<name>TXC05_LYCSI</name>
<evidence type="ECO:0000250" key="1"/>
<evidence type="ECO:0000255" key="2"/>
<evidence type="ECO:0000305" key="3"/>
<feature type="signal peptide" evidence="2">
    <location>
        <begin position="1"/>
        <end position="18"/>
    </location>
</feature>
<feature type="propeptide" id="PRO_0000401853" evidence="1">
    <location>
        <begin position="19"/>
        <end position="38"/>
    </location>
</feature>
<feature type="chain" id="PRO_0000401854" description="U12-lycotoxin-Ls1a">
    <location>
        <begin position="39"/>
        <end position="93"/>
    </location>
</feature>
<sequence length="93" mass="10224">MKFAVILLFSLVVLTVASESVEEVRREIDIEDLPEQQRGCADLRQPCTEGDDCSCCGSEGVCNCSHPHKKGCYCKTAGPLEKLAKKFKGCKNK</sequence>
<accession>B6DD17</accession>